<protein>
    <recommendedName>
        <fullName>Uncharacterized protein MJ0317</fullName>
    </recommendedName>
</protein>
<dbReference type="EMBL" id="L77117">
    <property type="protein sequence ID" value="AAB98311.1"/>
    <property type="molecule type" value="Genomic_DNA"/>
</dbReference>
<dbReference type="PIR" id="F64339">
    <property type="entry name" value="F64339"/>
</dbReference>
<dbReference type="RefSeq" id="WP_010869815.1">
    <property type="nucleotide sequence ID" value="NC_000909.1"/>
</dbReference>
<dbReference type="SMR" id="Q57765"/>
<dbReference type="FunCoup" id="Q57765">
    <property type="interactions" value="6"/>
</dbReference>
<dbReference type="STRING" id="243232.MJ_0317"/>
<dbReference type="PaxDb" id="243232-MJ_0317"/>
<dbReference type="EnsemblBacteria" id="AAB98311">
    <property type="protein sequence ID" value="AAB98311"/>
    <property type="gene ID" value="MJ_0317"/>
</dbReference>
<dbReference type="GeneID" id="1451172"/>
<dbReference type="KEGG" id="mja:MJ_0317"/>
<dbReference type="eggNOG" id="arCOG05029">
    <property type="taxonomic scope" value="Archaea"/>
</dbReference>
<dbReference type="HOGENOM" id="CLU_083800_0_0_2"/>
<dbReference type="InParanoid" id="Q57765"/>
<dbReference type="OrthoDB" id="59181at2157"/>
<dbReference type="Proteomes" id="UP000000805">
    <property type="component" value="Chromosome"/>
</dbReference>
<keyword id="KW-1185">Reference proteome</keyword>
<gene>
    <name type="ordered locus">MJ0317</name>
</gene>
<accession>Q57765</accession>
<feature type="chain" id="PRO_0000106790" description="Uncharacterized protein MJ0317">
    <location>
        <begin position="1"/>
        <end position="224"/>
    </location>
</feature>
<name>Y317_METJA</name>
<organism>
    <name type="scientific">Methanocaldococcus jannaschii (strain ATCC 43067 / DSM 2661 / JAL-1 / JCM 10045 / NBRC 100440)</name>
    <name type="common">Methanococcus jannaschii</name>
    <dbReference type="NCBI Taxonomy" id="243232"/>
    <lineage>
        <taxon>Archaea</taxon>
        <taxon>Methanobacteriati</taxon>
        <taxon>Methanobacteriota</taxon>
        <taxon>Methanomada group</taxon>
        <taxon>Methanococci</taxon>
        <taxon>Methanococcales</taxon>
        <taxon>Methanocaldococcaceae</taxon>
        <taxon>Methanocaldococcus</taxon>
    </lineage>
</organism>
<sequence>MKPKYALRKDMIGEFTLNKSFNTYRGKVLKADFNGPIEGIVMKNKKEHIYFYPLLALHMVKPLNCVPINVIPKTSLPTNPKNVHIKEALSRIVGRTLKVYYETPKTSYLGRLLGFTRGVFSWTLVLEIHGEVVLLFNPDYIVYYGTKWKFLKNNPPYKPPRLMNITKTANYLKRCLLEDVIIEPEYPRINIEDKVFVYPYGVVSKDDYLGKTVEDILKEKEFLI</sequence>
<proteinExistence type="predicted"/>
<reference key="1">
    <citation type="journal article" date="1996" name="Science">
        <title>Complete genome sequence of the methanogenic archaeon, Methanococcus jannaschii.</title>
        <authorList>
            <person name="Bult C.J."/>
            <person name="White O."/>
            <person name="Olsen G.J."/>
            <person name="Zhou L."/>
            <person name="Fleischmann R.D."/>
            <person name="Sutton G.G."/>
            <person name="Blake J.A."/>
            <person name="FitzGerald L.M."/>
            <person name="Clayton R.A."/>
            <person name="Gocayne J.D."/>
            <person name="Kerlavage A.R."/>
            <person name="Dougherty B.A."/>
            <person name="Tomb J.-F."/>
            <person name="Adams M.D."/>
            <person name="Reich C.I."/>
            <person name="Overbeek R."/>
            <person name="Kirkness E.F."/>
            <person name="Weinstock K.G."/>
            <person name="Merrick J.M."/>
            <person name="Glodek A."/>
            <person name="Scott J.L."/>
            <person name="Geoghagen N.S.M."/>
            <person name="Weidman J.F."/>
            <person name="Fuhrmann J.L."/>
            <person name="Nguyen D."/>
            <person name="Utterback T.R."/>
            <person name="Kelley J.M."/>
            <person name="Peterson J.D."/>
            <person name="Sadow P.W."/>
            <person name="Hanna M.C."/>
            <person name="Cotton M.D."/>
            <person name="Roberts K.M."/>
            <person name="Hurst M.A."/>
            <person name="Kaine B.P."/>
            <person name="Borodovsky M."/>
            <person name="Klenk H.-P."/>
            <person name="Fraser C.M."/>
            <person name="Smith H.O."/>
            <person name="Woese C.R."/>
            <person name="Venter J.C."/>
        </authorList>
    </citation>
    <scope>NUCLEOTIDE SEQUENCE [LARGE SCALE GENOMIC DNA]</scope>
    <source>
        <strain>ATCC 43067 / DSM 2661 / JAL-1 / JCM 10045 / NBRC 100440</strain>
    </source>
</reference>